<feature type="signal peptide" evidence="1">
    <location>
        <begin position="1"/>
        <end position="28"/>
    </location>
</feature>
<feature type="chain" id="PRO_5000378051" description="Flagellar P-ring protein">
    <location>
        <begin position="29"/>
        <end position="373"/>
    </location>
</feature>
<keyword id="KW-0975">Bacterial flagellum</keyword>
<keyword id="KW-0574">Periplasm</keyword>
<keyword id="KW-0732">Signal</keyword>
<proteinExistence type="inferred from homology"/>
<reference key="1">
    <citation type="submission" date="2008-05" db="EMBL/GenBank/DDBJ databases">
        <title>Complete sequence of Rhodopseudomonas palustris TIE-1.</title>
        <authorList>
            <consortium name="US DOE Joint Genome Institute"/>
            <person name="Lucas S."/>
            <person name="Copeland A."/>
            <person name="Lapidus A."/>
            <person name="Glavina del Rio T."/>
            <person name="Dalin E."/>
            <person name="Tice H."/>
            <person name="Pitluck S."/>
            <person name="Chain P."/>
            <person name="Malfatti S."/>
            <person name="Shin M."/>
            <person name="Vergez L."/>
            <person name="Lang D."/>
            <person name="Schmutz J."/>
            <person name="Larimer F."/>
            <person name="Land M."/>
            <person name="Hauser L."/>
            <person name="Kyrpides N."/>
            <person name="Mikhailova N."/>
            <person name="Emerson D."/>
            <person name="Newman D.K."/>
            <person name="Roden E."/>
            <person name="Richardson P."/>
        </authorList>
    </citation>
    <scope>NUCLEOTIDE SEQUENCE [LARGE SCALE GENOMIC DNA]</scope>
    <source>
        <strain>TIE-1</strain>
    </source>
</reference>
<accession>B3QIX2</accession>
<protein>
    <recommendedName>
        <fullName evidence="1">Flagellar P-ring protein</fullName>
    </recommendedName>
    <alternativeName>
        <fullName evidence="1">Basal body P-ring protein</fullName>
    </alternativeName>
</protein>
<sequence length="373" mass="38615">MPRVSTHLVKLAAAALCALLLSAVAASATSRIKDLANIEGIRQNQLIGYGLVVGLNGTGDTLNNIPFTKQSLQAMLERMGVNIRGATIRTGNVAAVMVTGNLPPFATQGTRMDVTVSALGDAKNLQGGTLLVTPLLGADGNVYAVAQGSLAIGGFQAEGEAAKITRGVPTVGRIANGAIIEREIEFALNRLPNVRLALRNADFTTAKRIAAAVNDYLGTKCAEPLDPSTVQLSIPGEFKGNAVALLTEIEQLQVEPDQAAKIVIDERSGIIVMGRDVRVATVAVAQGNLTVSISESPQVSQPNPLGGGRTVVTPNSRIGVTEDGKKLAVVKDGVSLQQLVDGLNSLGIGPRDLIGILQAIKAAGAIEADIEVM</sequence>
<comment type="function">
    <text evidence="1">Assembles around the rod to form the L-ring and probably protects the motor/basal body from shearing forces during rotation.</text>
</comment>
<comment type="subunit">
    <text evidence="1">The basal body constitutes a major portion of the flagellar organelle and consists of four rings (L,P,S, and M) mounted on a central rod.</text>
</comment>
<comment type="subcellular location">
    <subcellularLocation>
        <location evidence="1">Periplasm</location>
    </subcellularLocation>
    <subcellularLocation>
        <location evidence="1">Bacterial flagellum basal body</location>
    </subcellularLocation>
</comment>
<comment type="similarity">
    <text evidence="1">Belongs to the FlgI family.</text>
</comment>
<gene>
    <name evidence="1" type="primary">flgI</name>
    <name type="ordered locus">Rpal_4432</name>
</gene>
<organism>
    <name type="scientific">Rhodopseudomonas palustris (strain TIE-1)</name>
    <dbReference type="NCBI Taxonomy" id="395960"/>
    <lineage>
        <taxon>Bacteria</taxon>
        <taxon>Pseudomonadati</taxon>
        <taxon>Pseudomonadota</taxon>
        <taxon>Alphaproteobacteria</taxon>
        <taxon>Hyphomicrobiales</taxon>
        <taxon>Nitrobacteraceae</taxon>
        <taxon>Rhodopseudomonas</taxon>
    </lineage>
</organism>
<evidence type="ECO:0000255" key="1">
    <source>
        <dbReference type="HAMAP-Rule" id="MF_00416"/>
    </source>
</evidence>
<name>FLGI_RHOPT</name>
<dbReference type="EMBL" id="CP001096">
    <property type="protein sequence ID" value="ACF02928.1"/>
    <property type="molecule type" value="Genomic_DNA"/>
</dbReference>
<dbReference type="RefSeq" id="WP_011159445.1">
    <property type="nucleotide sequence ID" value="NC_011004.1"/>
</dbReference>
<dbReference type="SMR" id="B3QIX2"/>
<dbReference type="KEGG" id="rpt:Rpal_4432"/>
<dbReference type="HOGENOM" id="CLU_045235_1_0_5"/>
<dbReference type="OrthoDB" id="9786431at2"/>
<dbReference type="Proteomes" id="UP000001725">
    <property type="component" value="Chromosome"/>
</dbReference>
<dbReference type="GO" id="GO:0009428">
    <property type="term" value="C:bacterial-type flagellum basal body, distal rod, P ring"/>
    <property type="evidence" value="ECO:0007669"/>
    <property type="project" value="InterPro"/>
</dbReference>
<dbReference type="GO" id="GO:0030288">
    <property type="term" value="C:outer membrane-bounded periplasmic space"/>
    <property type="evidence" value="ECO:0007669"/>
    <property type="project" value="InterPro"/>
</dbReference>
<dbReference type="GO" id="GO:0005198">
    <property type="term" value="F:structural molecule activity"/>
    <property type="evidence" value="ECO:0007669"/>
    <property type="project" value="InterPro"/>
</dbReference>
<dbReference type="GO" id="GO:0071973">
    <property type="term" value="P:bacterial-type flagellum-dependent cell motility"/>
    <property type="evidence" value="ECO:0007669"/>
    <property type="project" value="InterPro"/>
</dbReference>
<dbReference type="HAMAP" id="MF_00416">
    <property type="entry name" value="FlgI"/>
    <property type="match status" value="1"/>
</dbReference>
<dbReference type="InterPro" id="IPR001782">
    <property type="entry name" value="Flag_FlgI"/>
</dbReference>
<dbReference type="NCBIfam" id="NF003676">
    <property type="entry name" value="PRK05303.1"/>
    <property type="match status" value="1"/>
</dbReference>
<dbReference type="PANTHER" id="PTHR30381">
    <property type="entry name" value="FLAGELLAR P-RING PERIPLASMIC PROTEIN FLGI"/>
    <property type="match status" value="1"/>
</dbReference>
<dbReference type="PANTHER" id="PTHR30381:SF0">
    <property type="entry name" value="FLAGELLAR P-RING PROTEIN"/>
    <property type="match status" value="1"/>
</dbReference>
<dbReference type="Pfam" id="PF02119">
    <property type="entry name" value="FlgI"/>
    <property type="match status" value="1"/>
</dbReference>
<dbReference type="PRINTS" id="PR01010">
    <property type="entry name" value="FLGPRINGFLGI"/>
</dbReference>